<sequence>MSHKINSKPFILHSEFKPSGDQPQAIEILAENLNDGLAHQTLLGVTGSGKTFTIANVIAKLNRPAMLLAPNKTLAAQLYAEMKAFFPENAVEYFVSYYDYYQPEAYVPSSDTFIEKDASINDQIEQMRLSATKSFLERRDTIVVASVSAIYGLGDPDSYLKMMLHLQTGAIIDQRQILVRLAELQYTRNDQAFQRGTFRVRGEIIDIFPAESDDRAVRIELFDDEIERLSLFDPLTGTGFGAVPRFTVYPKTHYVTPREQILDAIEKIKSELADRREYFIKENKLLEEQRITQRTQFDIEMMNELGYCSGIENYSRYLSGRNEGEPPPTLFDYMPSDALLVIDESHVTVPQIGGMYRGDRSRKETLVEYGFRLPSALDNRPLRFEEFERLAPQTIYVSATPGPYELEKSGTEIIDQVVRPTGLLDPEIEIRPVSIQVDDLLSEARQRADRNERVLVTTLTKRMAEDLTDYLDEHGIRVRYLHSDIDTVERVEIIRDLRLGEFDVLVGINLLREGLDIPEVSLVAILDADKEGFLRSERSLIQTIGRAARNLKGKAILYADRITNSMEKAITETNRRREKQMKYNEEHGITPQGLNKKVGELLDIGQGGSNKSRNKPRSQKAAEPATTYAIPMTAKEYQQQIKKLEQQMYKFAQDLEFEKAAAIRDQLHKLREQFVENG</sequence>
<name>UVRB_MANSM</name>
<comment type="function">
    <text evidence="1">The UvrABC repair system catalyzes the recognition and processing of DNA lesions. A damage recognition complex composed of 2 UvrA and 2 UvrB subunits scans DNA for abnormalities. Upon binding of the UvrA(2)B(2) complex to a putative damaged site, the DNA wraps around one UvrB monomer. DNA wrap is dependent on ATP binding by UvrB and probably causes local melting of the DNA helix, facilitating insertion of UvrB beta-hairpin between the DNA strands. Then UvrB probes one DNA strand for the presence of a lesion. If a lesion is found the UvrA subunits dissociate and the UvrB-DNA preincision complex is formed. This complex is subsequently bound by UvrC and the second UvrB is released. If no lesion is found, the DNA wraps around the other UvrB subunit that will check the other stand for damage.</text>
</comment>
<comment type="subunit">
    <text evidence="1">Forms a heterotetramer with UvrA during the search for lesions. Interacts with UvrC in an incision complex.</text>
</comment>
<comment type="subcellular location">
    <subcellularLocation>
        <location evidence="1">Cytoplasm</location>
    </subcellularLocation>
</comment>
<comment type="domain">
    <text evidence="1">The beta-hairpin motif is involved in DNA binding.</text>
</comment>
<comment type="similarity">
    <text evidence="1">Belongs to the UvrB family.</text>
</comment>
<accession>Q65ST2</accession>
<feature type="chain" id="PRO_0000227327" description="UvrABC system protein B">
    <location>
        <begin position="1"/>
        <end position="678"/>
    </location>
</feature>
<feature type="domain" description="Helicase ATP-binding" evidence="1">
    <location>
        <begin position="31"/>
        <end position="417"/>
    </location>
</feature>
<feature type="domain" description="Helicase C-terminal" evidence="1">
    <location>
        <begin position="436"/>
        <end position="602"/>
    </location>
</feature>
<feature type="domain" description="UVR" evidence="1">
    <location>
        <begin position="638"/>
        <end position="673"/>
    </location>
</feature>
<feature type="region of interest" description="Disordered" evidence="2">
    <location>
        <begin position="603"/>
        <end position="625"/>
    </location>
</feature>
<feature type="short sequence motif" description="Beta-hairpin">
    <location>
        <begin position="97"/>
        <end position="120"/>
    </location>
</feature>
<feature type="binding site" evidence="1">
    <location>
        <begin position="44"/>
        <end position="51"/>
    </location>
    <ligand>
        <name>ATP</name>
        <dbReference type="ChEBI" id="CHEBI:30616"/>
    </ligand>
</feature>
<proteinExistence type="inferred from homology"/>
<keyword id="KW-0067">ATP-binding</keyword>
<keyword id="KW-0963">Cytoplasm</keyword>
<keyword id="KW-0227">DNA damage</keyword>
<keyword id="KW-0228">DNA excision</keyword>
<keyword id="KW-0234">DNA repair</keyword>
<keyword id="KW-0267">Excision nuclease</keyword>
<keyword id="KW-0547">Nucleotide-binding</keyword>
<keyword id="KW-0742">SOS response</keyword>
<dbReference type="EMBL" id="AE016827">
    <property type="protein sequence ID" value="AAU37978.1"/>
    <property type="molecule type" value="Genomic_DNA"/>
</dbReference>
<dbReference type="RefSeq" id="WP_011200545.1">
    <property type="nucleotide sequence ID" value="NC_006300.1"/>
</dbReference>
<dbReference type="SMR" id="Q65ST2"/>
<dbReference type="STRING" id="221988.MS1371"/>
<dbReference type="KEGG" id="msu:MS1371"/>
<dbReference type="eggNOG" id="COG0556">
    <property type="taxonomic scope" value="Bacteria"/>
</dbReference>
<dbReference type="HOGENOM" id="CLU_009621_2_1_6"/>
<dbReference type="OrthoDB" id="9806651at2"/>
<dbReference type="Proteomes" id="UP000000607">
    <property type="component" value="Chromosome"/>
</dbReference>
<dbReference type="GO" id="GO:0005737">
    <property type="term" value="C:cytoplasm"/>
    <property type="evidence" value="ECO:0007669"/>
    <property type="project" value="UniProtKB-SubCell"/>
</dbReference>
<dbReference type="GO" id="GO:0009380">
    <property type="term" value="C:excinuclease repair complex"/>
    <property type="evidence" value="ECO:0007669"/>
    <property type="project" value="InterPro"/>
</dbReference>
<dbReference type="GO" id="GO:0005524">
    <property type="term" value="F:ATP binding"/>
    <property type="evidence" value="ECO:0007669"/>
    <property type="project" value="UniProtKB-UniRule"/>
</dbReference>
<dbReference type="GO" id="GO:0016887">
    <property type="term" value="F:ATP hydrolysis activity"/>
    <property type="evidence" value="ECO:0007669"/>
    <property type="project" value="InterPro"/>
</dbReference>
<dbReference type="GO" id="GO:0003677">
    <property type="term" value="F:DNA binding"/>
    <property type="evidence" value="ECO:0007669"/>
    <property type="project" value="UniProtKB-UniRule"/>
</dbReference>
<dbReference type="GO" id="GO:0009381">
    <property type="term" value="F:excinuclease ABC activity"/>
    <property type="evidence" value="ECO:0007669"/>
    <property type="project" value="UniProtKB-UniRule"/>
</dbReference>
<dbReference type="GO" id="GO:0006289">
    <property type="term" value="P:nucleotide-excision repair"/>
    <property type="evidence" value="ECO:0007669"/>
    <property type="project" value="UniProtKB-UniRule"/>
</dbReference>
<dbReference type="GO" id="GO:0009432">
    <property type="term" value="P:SOS response"/>
    <property type="evidence" value="ECO:0007669"/>
    <property type="project" value="UniProtKB-UniRule"/>
</dbReference>
<dbReference type="CDD" id="cd17916">
    <property type="entry name" value="DEXHc_UvrB"/>
    <property type="match status" value="1"/>
</dbReference>
<dbReference type="CDD" id="cd18790">
    <property type="entry name" value="SF2_C_UvrB"/>
    <property type="match status" value="1"/>
</dbReference>
<dbReference type="FunFam" id="3.40.50.300:FF:000257">
    <property type="entry name" value="UvrABC system protein B"/>
    <property type="match status" value="1"/>
</dbReference>
<dbReference type="FunFam" id="3.40.50.300:FF:000477">
    <property type="entry name" value="UvrABC system protein B"/>
    <property type="match status" value="1"/>
</dbReference>
<dbReference type="Gene3D" id="3.40.50.300">
    <property type="entry name" value="P-loop containing nucleotide triphosphate hydrolases"/>
    <property type="match status" value="3"/>
</dbReference>
<dbReference type="Gene3D" id="4.10.860.10">
    <property type="entry name" value="UVR domain"/>
    <property type="match status" value="1"/>
</dbReference>
<dbReference type="HAMAP" id="MF_00204">
    <property type="entry name" value="UvrB"/>
    <property type="match status" value="1"/>
</dbReference>
<dbReference type="InterPro" id="IPR006935">
    <property type="entry name" value="Helicase/UvrB_N"/>
</dbReference>
<dbReference type="InterPro" id="IPR014001">
    <property type="entry name" value="Helicase_ATP-bd"/>
</dbReference>
<dbReference type="InterPro" id="IPR001650">
    <property type="entry name" value="Helicase_C-like"/>
</dbReference>
<dbReference type="InterPro" id="IPR027417">
    <property type="entry name" value="P-loop_NTPase"/>
</dbReference>
<dbReference type="InterPro" id="IPR001943">
    <property type="entry name" value="UVR_dom"/>
</dbReference>
<dbReference type="InterPro" id="IPR036876">
    <property type="entry name" value="UVR_dom_sf"/>
</dbReference>
<dbReference type="InterPro" id="IPR004807">
    <property type="entry name" value="UvrB"/>
</dbReference>
<dbReference type="InterPro" id="IPR041471">
    <property type="entry name" value="UvrB_inter"/>
</dbReference>
<dbReference type="InterPro" id="IPR024759">
    <property type="entry name" value="UvrB_YAD/RRR_dom"/>
</dbReference>
<dbReference type="NCBIfam" id="NF003673">
    <property type="entry name" value="PRK05298.1"/>
    <property type="match status" value="1"/>
</dbReference>
<dbReference type="NCBIfam" id="TIGR00631">
    <property type="entry name" value="uvrb"/>
    <property type="match status" value="1"/>
</dbReference>
<dbReference type="PANTHER" id="PTHR24029">
    <property type="entry name" value="UVRABC SYSTEM PROTEIN B"/>
    <property type="match status" value="1"/>
</dbReference>
<dbReference type="PANTHER" id="PTHR24029:SF0">
    <property type="entry name" value="UVRABC SYSTEM PROTEIN B"/>
    <property type="match status" value="1"/>
</dbReference>
<dbReference type="Pfam" id="PF00271">
    <property type="entry name" value="Helicase_C"/>
    <property type="match status" value="1"/>
</dbReference>
<dbReference type="Pfam" id="PF04851">
    <property type="entry name" value="ResIII"/>
    <property type="match status" value="1"/>
</dbReference>
<dbReference type="Pfam" id="PF02151">
    <property type="entry name" value="UVR"/>
    <property type="match status" value="1"/>
</dbReference>
<dbReference type="Pfam" id="PF12344">
    <property type="entry name" value="UvrB"/>
    <property type="match status" value="1"/>
</dbReference>
<dbReference type="Pfam" id="PF17757">
    <property type="entry name" value="UvrB_inter"/>
    <property type="match status" value="1"/>
</dbReference>
<dbReference type="SMART" id="SM00487">
    <property type="entry name" value="DEXDc"/>
    <property type="match status" value="1"/>
</dbReference>
<dbReference type="SMART" id="SM00490">
    <property type="entry name" value="HELICc"/>
    <property type="match status" value="1"/>
</dbReference>
<dbReference type="SUPFAM" id="SSF46600">
    <property type="entry name" value="C-terminal UvrC-binding domain of UvrB"/>
    <property type="match status" value="1"/>
</dbReference>
<dbReference type="SUPFAM" id="SSF52540">
    <property type="entry name" value="P-loop containing nucleoside triphosphate hydrolases"/>
    <property type="match status" value="2"/>
</dbReference>
<dbReference type="PROSITE" id="PS51192">
    <property type="entry name" value="HELICASE_ATP_BIND_1"/>
    <property type="match status" value="1"/>
</dbReference>
<dbReference type="PROSITE" id="PS51194">
    <property type="entry name" value="HELICASE_CTER"/>
    <property type="match status" value="1"/>
</dbReference>
<dbReference type="PROSITE" id="PS50151">
    <property type="entry name" value="UVR"/>
    <property type="match status" value="1"/>
</dbReference>
<reference key="1">
    <citation type="journal article" date="2004" name="Nat. Biotechnol.">
        <title>The genome sequence of the capnophilic rumen bacterium Mannheimia succiniciproducens.</title>
        <authorList>
            <person name="Hong S.H."/>
            <person name="Kim J.S."/>
            <person name="Lee S.Y."/>
            <person name="In Y.H."/>
            <person name="Choi S.S."/>
            <person name="Rih J.-K."/>
            <person name="Kim C.H."/>
            <person name="Jeong H."/>
            <person name="Hur C.G."/>
            <person name="Kim J.J."/>
        </authorList>
    </citation>
    <scope>NUCLEOTIDE SEQUENCE [LARGE SCALE GENOMIC DNA]</scope>
    <source>
        <strain>KCTC 0769BP / MBEL55E</strain>
    </source>
</reference>
<gene>
    <name evidence="1" type="primary">uvrB</name>
    <name type="ordered locus">MS1371</name>
</gene>
<organism>
    <name type="scientific">Mannheimia succiniciproducens (strain KCTC 0769BP / MBEL55E)</name>
    <dbReference type="NCBI Taxonomy" id="221988"/>
    <lineage>
        <taxon>Bacteria</taxon>
        <taxon>Pseudomonadati</taxon>
        <taxon>Pseudomonadota</taxon>
        <taxon>Gammaproteobacteria</taxon>
        <taxon>Pasteurellales</taxon>
        <taxon>Pasteurellaceae</taxon>
        <taxon>Basfia</taxon>
    </lineage>
</organism>
<protein>
    <recommendedName>
        <fullName evidence="1">UvrABC system protein B</fullName>
        <shortName evidence="1">Protein UvrB</shortName>
    </recommendedName>
    <alternativeName>
        <fullName evidence="1">Excinuclease ABC subunit B</fullName>
    </alternativeName>
</protein>
<evidence type="ECO:0000255" key="1">
    <source>
        <dbReference type="HAMAP-Rule" id="MF_00204"/>
    </source>
</evidence>
<evidence type="ECO:0000256" key="2">
    <source>
        <dbReference type="SAM" id="MobiDB-lite"/>
    </source>
</evidence>